<dbReference type="EMBL" id="BC157230">
    <property type="protein sequence ID" value="AAI57231.1"/>
    <property type="molecule type" value="mRNA"/>
</dbReference>
<dbReference type="RefSeq" id="NP_001107370.1">
    <property type="nucleotide sequence ID" value="NM_001113898.1"/>
</dbReference>
<dbReference type="SMR" id="A9ULE9"/>
<dbReference type="FunCoup" id="A9ULE9">
    <property type="interactions" value="146"/>
</dbReference>
<dbReference type="STRING" id="8364.ENSXETP00000017760"/>
<dbReference type="PaxDb" id="8364-ENSXETP00000024450"/>
<dbReference type="GeneID" id="100135195"/>
<dbReference type="KEGG" id="xtr:100135195"/>
<dbReference type="AGR" id="Xenbase:XB-GENE-5859098"/>
<dbReference type="CTD" id="79962"/>
<dbReference type="Xenbase" id="XB-GENE-5859098">
    <property type="gene designation" value="dnajc22"/>
</dbReference>
<dbReference type="eggNOG" id="KOG0714">
    <property type="taxonomic scope" value="Eukaryota"/>
</dbReference>
<dbReference type="HOGENOM" id="CLU_057927_1_0_1"/>
<dbReference type="InParanoid" id="A9ULE9"/>
<dbReference type="OMA" id="VWWHCLL"/>
<dbReference type="OrthoDB" id="10262359at2759"/>
<dbReference type="PhylomeDB" id="A9ULE9"/>
<dbReference type="TreeFam" id="TF324581"/>
<dbReference type="Proteomes" id="UP000008143">
    <property type="component" value="Chromosome 2"/>
</dbReference>
<dbReference type="Bgee" id="ENSXETG00000011192">
    <property type="expression patterns" value="Expressed in liver and 4 other cell types or tissues"/>
</dbReference>
<dbReference type="GO" id="GO:0016020">
    <property type="term" value="C:membrane"/>
    <property type="evidence" value="ECO:0007669"/>
    <property type="project" value="UniProtKB-SubCell"/>
</dbReference>
<dbReference type="CDD" id="cd06257">
    <property type="entry name" value="DnaJ"/>
    <property type="match status" value="1"/>
</dbReference>
<dbReference type="Gene3D" id="1.10.287.110">
    <property type="entry name" value="DnaJ domain"/>
    <property type="match status" value="1"/>
</dbReference>
<dbReference type="InterPro" id="IPR001623">
    <property type="entry name" value="DnaJ_domain"/>
</dbReference>
<dbReference type="InterPro" id="IPR036869">
    <property type="entry name" value="J_dom_sf"/>
</dbReference>
<dbReference type="InterPro" id="IPR007829">
    <property type="entry name" value="TM2"/>
</dbReference>
<dbReference type="PANTHER" id="PTHR44733">
    <property type="entry name" value="DNAJ HOMOLOG SUBFAMILY C MEMBER 22"/>
    <property type="match status" value="1"/>
</dbReference>
<dbReference type="PANTHER" id="PTHR44733:SF1">
    <property type="entry name" value="DNAJ HOMOLOG SUBFAMILY C MEMBER 22"/>
    <property type="match status" value="1"/>
</dbReference>
<dbReference type="Pfam" id="PF00226">
    <property type="entry name" value="DnaJ"/>
    <property type="match status" value="1"/>
</dbReference>
<dbReference type="Pfam" id="PF05154">
    <property type="entry name" value="TM2"/>
    <property type="match status" value="1"/>
</dbReference>
<dbReference type="PRINTS" id="PR00625">
    <property type="entry name" value="JDOMAIN"/>
</dbReference>
<dbReference type="SMART" id="SM00271">
    <property type="entry name" value="DnaJ"/>
    <property type="match status" value="1"/>
</dbReference>
<dbReference type="SUPFAM" id="SSF46565">
    <property type="entry name" value="Chaperone J-domain"/>
    <property type="match status" value="1"/>
</dbReference>
<dbReference type="PROSITE" id="PS50076">
    <property type="entry name" value="DNAJ_2"/>
    <property type="match status" value="1"/>
</dbReference>
<name>DJC22_XENTR</name>
<protein>
    <recommendedName>
        <fullName>DnaJ homolog subfamily C member 22</fullName>
    </recommendedName>
</protein>
<proteinExistence type="evidence at transcript level"/>
<reference key="1">
    <citation type="submission" date="2007-12" db="EMBL/GenBank/DDBJ databases">
        <authorList>
            <consortium name="NIH - Xenopus Gene Collection (XGC) project"/>
        </authorList>
    </citation>
    <scope>NUCLEOTIDE SEQUENCE [LARGE SCALE MRNA]</scope>
    <source>
        <strain>N6</strain>
        <tissue>Liver</tissue>
    </source>
</reference>
<accession>A9ULE9</accession>
<sequence>MGKSLLAAYGLWALGGPLGLYHIYLGRDSHALLWMLTLGGFGMGWMWDFWKIPIHVYKYNRQERKNIEVKEGEPPASPIRFIGQVATGIYFGIVAAIGLSFLSSFHMVVLPLAVALGVHLVATVGEQTSDLKNTLIAAFLTSPIFYGRAVSMIPISLTASITSQKHMRYRLQQEKQEKLSLRLYRIGLVYLAFTGPLAYSALLNTSLTVSYVAGSIGSMLEWLSIFPSISALVERLLLLPYRVWAVFSGGGVFRDHYFKEWEKIYEFVATFQSEKEEMACKVLGVNFKSTMEEINRKYRELVKIWHPDHNRHRLEEAQEHFLEIQAAYETLMRLRKSKTL</sequence>
<feature type="chain" id="PRO_0000325866" description="DnaJ homolog subfamily C member 22">
    <location>
        <begin position="1"/>
        <end position="340"/>
    </location>
</feature>
<feature type="transmembrane region" description="Helical" evidence="1">
    <location>
        <begin position="5"/>
        <end position="25"/>
    </location>
</feature>
<feature type="transmembrane region" description="Helical" evidence="1">
    <location>
        <begin position="30"/>
        <end position="50"/>
    </location>
</feature>
<feature type="transmembrane region" description="Helical" evidence="1">
    <location>
        <begin position="81"/>
        <end position="101"/>
    </location>
</feature>
<feature type="transmembrane region" description="Helical" evidence="1">
    <location>
        <begin position="105"/>
        <end position="125"/>
    </location>
</feature>
<feature type="transmembrane region" description="Helical" evidence="1">
    <location>
        <begin position="135"/>
        <end position="155"/>
    </location>
</feature>
<feature type="transmembrane region" description="Helical" evidence="1">
    <location>
        <begin position="186"/>
        <end position="206"/>
    </location>
</feature>
<feature type="transmembrane region" description="Helical" evidence="1">
    <location>
        <begin position="212"/>
        <end position="232"/>
    </location>
</feature>
<feature type="domain" description="TM2" evidence="1">
    <location>
        <begin position="1"/>
        <end position="50"/>
    </location>
</feature>
<feature type="domain" description="J" evidence="2">
    <location>
        <begin position="278"/>
        <end position="340"/>
    </location>
</feature>
<keyword id="KW-0143">Chaperone</keyword>
<keyword id="KW-0472">Membrane</keyword>
<keyword id="KW-1185">Reference proteome</keyword>
<keyword id="KW-0812">Transmembrane</keyword>
<keyword id="KW-1133">Transmembrane helix</keyword>
<organism>
    <name type="scientific">Xenopus tropicalis</name>
    <name type="common">Western clawed frog</name>
    <name type="synonym">Silurana tropicalis</name>
    <dbReference type="NCBI Taxonomy" id="8364"/>
    <lineage>
        <taxon>Eukaryota</taxon>
        <taxon>Metazoa</taxon>
        <taxon>Chordata</taxon>
        <taxon>Craniata</taxon>
        <taxon>Vertebrata</taxon>
        <taxon>Euteleostomi</taxon>
        <taxon>Amphibia</taxon>
        <taxon>Batrachia</taxon>
        <taxon>Anura</taxon>
        <taxon>Pipoidea</taxon>
        <taxon>Pipidae</taxon>
        <taxon>Xenopodinae</taxon>
        <taxon>Xenopus</taxon>
        <taxon>Silurana</taxon>
    </lineage>
</organism>
<comment type="function">
    <text>May function as a co-chaperone.</text>
</comment>
<comment type="subcellular location">
    <subcellularLocation>
        <location evidence="3">Membrane</location>
        <topology evidence="3">Multi-pass membrane protein</topology>
    </subcellularLocation>
</comment>
<evidence type="ECO:0000255" key="1"/>
<evidence type="ECO:0000255" key="2">
    <source>
        <dbReference type="PROSITE-ProRule" id="PRU00286"/>
    </source>
</evidence>
<evidence type="ECO:0000305" key="3"/>
<gene>
    <name type="primary">dnajc22</name>
</gene>